<comment type="function">
    <text evidence="3">MFS efflux transporter; part of the gene cluster that mediates the biosynthesis of wortmanamides A and B, reduced long-chain polyketides amidated with a specific omega-amino acid, 5-aminopentanoic acid (5PA).</text>
</comment>
<comment type="subcellular location">
    <subcellularLocation>
        <location evidence="1">Membrane</location>
        <topology evidence="1">Multi-pass membrane protein</topology>
    </subcellularLocation>
</comment>
<comment type="similarity">
    <text evidence="5">Belongs to the major facilitator superfamily.</text>
</comment>
<accession>A0A2L0P0L8</accession>
<evidence type="ECO:0000255" key="1"/>
<evidence type="ECO:0000255" key="2">
    <source>
        <dbReference type="PROSITE-ProRule" id="PRU00498"/>
    </source>
</evidence>
<evidence type="ECO:0000269" key="3">
    <source>
    </source>
</evidence>
<evidence type="ECO:0000303" key="4">
    <source>
    </source>
</evidence>
<evidence type="ECO:0000305" key="5"/>
<sequence>MKSPSSSAEMQSSSPEPAPWKPDFQVYAIVIGLGITNLLAALENTVLTIAAPVVLTDLELGENFIWVTNAFFLSSTAILPLFGQFSNIFGRRYVMLTAVAIFVLGSGLCGGASTGAMLIAGRAIQGVGSGGIIMLSSIIISDLVPLRQRGNFSAILMSILGIGSALGPLIGGAIVSSISWRWVFYLNLPIGGVSFVFLFIFLRVKYNKEMTFWQKIKRIDLVGNAIVIASTVAILYALSYAGTRYPWRSWHTLVPLLVGFLGLFIFAGLQTTAFSAEPLMPTRFFRAPTSIILAINTFVSAALLYWCLFFLPVFLQSVKLYSPRRAGVALLPISLLGIPGSMVGAIALVRWGRYKPVHIFAFALQTLGLGLFTLFREDTSVAEWAVFQCIVAFGGGMIFTTMLPAFQAFIHERDIAACTAAWYFIRLFGHIWGVAIPAAIFNQRIDTLLGQGAISDPSVSKTIAAGGAYQAASAAFVKQFPGSLQLEIRSVYSQAIQRVFQVSIAFAGVAFLLTLLEKDVGLRKTLETDFGLEKEGAGQQADVEGRSHE</sequence>
<feature type="chain" id="PRO_0000452492" description="MFS-type transporter TwmF">
    <location>
        <begin position="1"/>
        <end position="549"/>
    </location>
</feature>
<feature type="transmembrane region" description="Helical" evidence="1">
    <location>
        <begin position="29"/>
        <end position="49"/>
    </location>
</feature>
<feature type="transmembrane region" description="Helical" evidence="1">
    <location>
        <begin position="63"/>
        <end position="83"/>
    </location>
</feature>
<feature type="transmembrane region" description="Helical" evidence="1">
    <location>
        <begin position="99"/>
        <end position="119"/>
    </location>
</feature>
<feature type="transmembrane region" description="Helical" evidence="1">
    <location>
        <begin position="126"/>
        <end position="146"/>
    </location>
</feature>
<feature type="transmembrane region" description="Helical" evidence="1">
    <location>
        <begin position="155"/>
        <end position="175"/>
    </location>
</feature>
<feature type="transmembrane region" description="Helical" evidence="1">
    <location>
        <begin position="182"/>
        <end position="202"/>
    </location>
</feature>
<feature type="transmembrane region" description="Helical" evidence="1">
    <location>
        <begin position="221"/>
        <end position="241"/>
    </location>
</feature>
<feature type="transmembrane region" description="Helical" evidence="1">
    <location>
        <begin position="249"/>
        <end position="269"/>
    </location>
</feature>
<feature type="transmembrane region" description="Helical" evidence="1">
    <location>
        <begin position="291"/>
        <end position="311"/>
    </location>
</feature>
<feature type="transmembrane region" description="Helical" evidence="1">
    <location>
        <begin position="328"/>
        <end position="348"/>
    </location>
</feature>
<feature type="transmembrane region" description="Helical" evidence="1">
    <location>
        <begin position="355"/>
        <end position="375"/>
    </location>
</feature>
<feature type="transmembrane region" description="Helical" evidence="1">
    <location>
        <begin position="390"/>
        <end position="410"/>
    </location>
</feature>
<feature type="transmembrane region" description="Helical" evidence="1">
    <location>
        <begin position="421"/>
        <end position="441"/>
    </location>
</feature>
<feature type="transmembrane region" description="Helical" evidence="1">
    <location>
        <begin position="502"/>
        <end position="522"/>
    </location>
</feature>
<feature type="glycosylation site" description="N-linked (GlcNAc...) asparagine" evidence="2">
    <location>
        <position position="151"/>
    </location>
</feature>
<protein>
    <recommendedName>
        <fullName evidence="4">MFS-type transporter TwmF</fullName>
    </recommendedName>
    <alternativeName>
        <fullName evidence="4">Wortmanamides biosynthesis cluster protein F</fullName>
    </alternativeName>
</protein>
<proteinExistence type="inferred from homology"/>
<name>TWMF_TALWO</name>
<keyword id="KW-0325">Glycoprotein</keyword>
<keyword id="KW-0472">Membrane</keyword>
<keyword id="KW-0812">Transmembrane</keyword>
<keyword id="KW-1133">Transmembrane helix</keyword>
<keyword id="KW-0813">Transport</keyword>
<organism>
    <name type="scientific">Talaromyces wortmannii</name>
    <name type="common">Penicillium wortmannii</name>
    <dbReference type="NCBI Taxonomy" id="28567"/>
    <lineage>
        <taxon>Eukaryota</taxon>
        <taxon>Fungi</taxon>
        <taxon>Dikarya</taxon>
        <taxon>Ascomycota</taxon>
        <taxon>Pezizomycotina</taxon>
        <taxon>Eurotiomycetes</taxon>
        <taxon>Eurotiomycetidae</taxon>
        <taxon>Eurotiales</taxon>
        <taxon>Trichocomaceae</taxon>
        <taxon>Talaromyces</taxon>
        <taxon>Talaromyces sect. Islandici</taxon>
    </lineage>
</organism>
<reference key="1">
    <citation type="journal article" date="2018" name="J. Am. Chem. Soc.">
        <title>Biosynthesis of long-chain N-acyl amide by a truncated polyketide synthase-nonribosomal peptide synthetase hybrid megasynthase in fungi.</title>
        <authorList>
            <person name="Hai Y."/>
            <person name="Tang Y."/>
        </authorList>
    </citation>
    <scope>NUCLEOTIDE SEQUENCE [GENOMIC DNA]</scope>
    <scope>FUNCTION</scope>
    <source>
        <strain>ATCC 26942 / CBS 387.67 / CCM F-175 / VKM F-2091</strain>
    </source>
</reference>
<gene>
    <name evidence="4" type="primary">TwmF</name>
    <name evidence="4" type="synonym">TwnF</name>
</gene>
<dbReference type="EMBL" id="MG837523">
    <property type="protein sequence ID" value="AUY61974.1"/>
    <property type="molecule type" value="Genomic_DNA"/>
</dbReference>
<dbReference type="EMBL" id="MH399766">
    <property type="protein sequence ID" value="QBC19708.1"/>
    <property type="molecule type" value="Genomic_DNA"/>
</dbReference>
<dbReference type="SMR" id="A0A2L0P0L8"/>
<dbReference type="GlyCosmos" id="A0A2L0P0L8">
    <property type="glycosylation" value="1 site, No reported glycans"/>
</dbReference>
<dbReference type="GO" id="GO:0005886">
    <property type="term" value="C:plasma membrane"/>
    <property type="evidence" value="ECO:0007669"/>
    <property type="project" value="TreeGrafter"/>
</dbReference>
<dbReference type="GO" id="GO:0022857">
    <property type="term" value="F:transmembrane transporter activity"/>
    <property type="evidence" value="ECO:0007669"/>
    <property type="project" value="InterPro"/>
</dbReference>
<dbReference type="Gene3D" id="1.20.1250.20">
    <property type="entry name" value="MFS general substrate transporter like domains"/>
    <property type="match status" value="1"/>
</dbReference>
<dbReference type="Gene3D" id="1.20.1720.10">
    <property type="entry name" value="Multidrug resistance protein D"/>
    <property type="match status" value="1"/>
</dbReference>
<dbReference type="InterPro" id="IPR011701">
    <property type="entry name" value="MFS"/>
</dbReference>
<dbReference type="InterPro" id="IPR020846">
    <property type="entry name" value="MFS_dom"/>
</dbReference>
<dbReference type="InterPro" id="IPR036259">
    <property type="entry name" value="MFS_trans_sf"/>
</dbReference>
<dbReference type="PANTHER" id="PTHR23501">
    <property type="entry name" value="MAJOR FACILITATOR SUPERFAMILY"/>
    <property type="match status" value="1"/>
</dbReference>
<dbReference type="PANTHER" id="PTHR23501:SF187">
    <property type="entry name" value="MAJOR FACILITATOR SUPERFAMILY (MFS) PROFILE DOMAIN-CONTAINING PROTEIN"/>
    <property type="match status" value="1"/>
</dbReference>
<dbReference type="Pfam" id="PF07690">
    <property type="entry name" value="MFS_1"/>
    <property type="match status" value="1"/>
</dbReference>
<dbReference type="PRINTS" id="PR01036">
    <property type="entry name" value="TCRTETB"/>
</dbReference>
<dbReference type="SUPFAM" id="SSF103473">
    <property type="entry name" value="MFS general substrate transporter"/>
    <property type="match status" value="1"/>
</dbReference>
<dbReference type="PROSITE" id="PS50850">
    <property type="entry name" value="MFS"/>
    <property type="match status" value="1"/>
</dbReference>